<evidence type="ECO:0000250" key="1"/>
<evidence type="ECO:0000250" key="2">
    <source>
        <dbReference type="UniProtKB" id="P07953"/>
    </source>
</evidence>
<evidence type="ECO:0000250" key="3">
    <source>
        <dbReference type="UniProtKB" id="Q16875"/>
    </source>
</evidence>
<evidence type="ECO:0000255" key="4"/>
<evidence type="ECO:0000305" key="5"/>
<reference key="1">
    <citation type="journal article" date="1993" name="Biochem. Biophys. Res. Commun.">
        <title>Isolation of a cDNA for chicken liver 6-phosphofructo-2-kinase/fructose-2,6-bisphosphatase.</title>
        <authorList>
            <person name="Li L."/>
            <person name="Lange A.J."/>
            <person name="Pilkis S.J."/>
        </authorList>
    </citation>
    <scope>NUCLEOTIDE SEQUENCE [MRNA]</scope>
    <source>
        <tissue>Liver</tissue>
    </source>
</reference>
<reference key="2">
    <citation type="submission" date="1999-04" db="EMBL/GenBank/DDBJ databases">
        <authorList>
            <person name="Yang Q.H."/>
            <person name="Dong M.Q."/>
            <person name="Li L."/>
        </authorList>
    </citation>
    <scope>SEQUENCE REVISION TO 184-186 AND 365-366</scope>
</reference>
<protein>
    <recommendedName>
        <fullName>6-phosphofructo-2-kinase/fructose-2,6-bisphosphatase</fullName>
        <shortName>6PF-2-K/Fru-2,6-P2ase</shortName>
        <shortName>PFK/FBPase</shortName>
    </recommendedName>
    <alternativeName>
        <fullName>6PF-2-K/Fru-2,6-P2ase liver isozyme</fullName>
    </alternativeName>
    <domain>
        <recommendedName>
            <fullName>6-phosphofructo-2-kinase</fullName>
            <ecNumber>2.7.1.105</ecNumber>
        </recommendedName>
    </domain>
    <domain>
        <recommendedName>
            <fullName>Fructose-2,6-bisphosphatase</fullName>
            <ecNumber>3.1.3.46</ecNumber>
        </recommendedName>
    </domain>
</protein>
<sequence>MAAVASGQLTQNPLQKVWVPLSLHRLRRRGSTVPQFTNCPTMVILVGLRRPGKTYISRKLTRYLNWIGMPTRVFNVGQYRREAVQSYKNYEFFRHDNEEAMQIRRQCALAALQDVRTYLSSEEGQVAVFDATNTTRERRALIMQFARENGYKVLFVESICDDPAIIEENIKQVKLSSPDYKGCTPEEAVADFLQRIECYKATYEPLDEQLDSGLSYIKIFDVGVRYLANRVQGHVQSRTVYYLMNTHVTPRAIYLSRHGESQLNLKGRIGGDAGLSTRGRQYAQALAEFIRSQSIRELKVWTSHMKRTIETAEALGVPYEQWKALNEIDAGVCEEMTYEEIQERYPEEFALRDQDKYRYRYPKGESYEDLVQRLEPVIMELERQENVLVICHQAVMRCLLAYFLDKSSEELPYLRCPLHTVLKLTPVAYGCEVESIFLNVEAVNTHRERPQNVDISRPPAEALVTVPEHY</sequence>
<name>F26L_CHICK</name>
<keyword id="KW-0067">ATP-binding</keyword>
<keyword id="KW-0378">Hydrolase</keyword>
<keyword id="KW-0418">Kinase</keyword>
<keyword id="KW-0511">Multifunctional enzyme</keyword>
<keyword id="KW-0547">Nucleotide-binding</keyword>
<keyword id="KW-0597">Phosphoprotein</keyword>
<keyword id="KW-1185">Reference proteome</keyword>
<keyword id="KW-0808">Transferase</keyword>
<organism>
    <name type="scientific">Gallus gallus</name>
    <name type="common">Chicken</name>
    <dbReference type="NCBI Taxonomy" id="9031"/>
    <lineage>
        <taxon>Eukaryota</taxon>
        <taxon>Metazoa</taxon>
        <taxon>Chordata</taxon>
        <taxon>Craniata</taxon>
        <taxon>Vertebrata</taxon>
        <taxon>Euteleostomi</taxon>
        <taxon>Archelosauria</taxon>
        <taxon>Archosauria</taxon>
        <taxon>Dinosauria</taxon>
        <taxon>Saurischia</taxon>
        <taxon>Theropoda</taxon>
        <taxon>Coelurosauria</taxon>
        <taxon>Aves</taxon>
        <taxon>Neognathae</taxon>
        <taxon>Galloanserae</taxon>
        <taxon>Galliformes</taxon>
        <taxon>Phasianidae</taxon>
        <taxon>Phasianinae</taxon>
        <taxon>Gallus</taxon>
    </lineage>
</organism>
<accession>Q91348</accession>
<accession>Q9PWA7</accession>
<feature type="chain" id="PRO_0000179972" description="6-phosphofructo-2-kinase/fructose-2,6-bisphosphatase">
    <location>
        <begin position="1"/>
        <end position="470"/>
    </location>
</feature>
<feature type="region of interest" description="6-phosphofructo-2-kinase">
    <location>
        <begin position="1"/>
        <end position="249"/>
    </location>
</feature>
<feature type="region of interest" description="Fructose-2,6-bisphosphatase">
    <location>
        <begin position="250"/>
        <end position="469"/>
    </location>
</feature>
<feature type="active site" evidence="4">
    <location>
        <position position="130"/>
    </location>
</feature>
<feature type="active site" evidence="4">
    <location>
        <position position="160"/>
    </location>
</feature>
<feature type="active site" description="Tele-phosphohistidine intermediate" evidence="3">
    <location>
        <position position="258"/>
    </location>
</feature>
<feature type="active site" description="Proton donor/acceptor" evidence="3">
    <location>
        <position position="327"/>
    </location>
</feature>
<feature type="binding site" evidence="3">
    <location>
        <begin position="47"/>
        <end position="55"/>
    </location>
    <ligand>
        <name>ATP</name>
        <dbReference type="ChEBI" id="CHEBI:30616"/>
    </ligand>
</feature>
<feature type="binding site" evidence="3">
    <location>
        <position position="80"/>
    </location>
    <ligand>
        <name>beta-D-fructose 6-phosphate</name>
        <dbReference type="ChEBI" id="CHEBI:57634"/>
    </ligand>
</feature>
<feature type="binding site" evidence="3">
    <location>
        <position position="104"/>
    </location>
    <ligand>
        <name>beta-D-fructose 6-phosphate</name>
        <dbReference type="ChEBI" id="CHEBI:57634"/>
    </ligand>
</feature>
<feature type="binding site" evidence="3">
    <location>
        <position position="132"/>
    </location>
    <ligand>
        <name>beta-D-fructose 6-phosphate</name>
        <dbReference type="ChEBI" id="CHEBI:57634"/>
    </ligand>
</feature>
<feature type="binding site" evidence="3">
    <location>
        <position position="138"/>
    </location>
    <ligand>
        <name>beta-D-fructose 6-phosphate</name>
        <dbReference type="ChEBI" id="CHEBI:57634"/>
    </ligand>
</feature>
<feature type="binding site" evidence="3">
    <location>
        <begin position="169"/>
        <end position="174"/>
    </location>
    <ligand>
        <name>ATP</name>
        <dbReference type="ChEBI" id="CHEBI:30616"/>
    </ligand>
</feature>
<feature type="binding site" evidence="3">
    <location>
        <position position="174"/>
    </location>
    <ligand>
        <name>beta-D-fructose 6-phosphate</name>
        <dbReference type="ChEBI" id="CHEBI:57634"/>
    </ligand>
</feature>
<feature type="binding site" evidence="3">
    <location>
        <position position="195"/>
    </location>
    <ligand>
        <name>beta-D-fructose 6-phosphate</name>
        <dbReference type="ChEBI" id="CHEBI:57634"/>
    </ligand>
</feature>
<feature type="binding site" evidence="3">
    <location>
        <position position="199"/>
    </location>
    <ligand>
        <name>beta-D-fructose 6-phosphate</name>
        <dbReference type="ChEBI" id="CHEBI:57634"/>
    </ligand>
</feature>
<feature type="binding site" evidence="3">
    <location>
        <position position="257"/>
    </location>
    <ligand>
        <name>beta-D-fructose 2,6-bisphosphate</name>
        <dbReference type="ChEBI" id="CHEBI:58579"/>
    </ligand>
</feature>
<feature type="binding site" evidence="3">
    <location>
        <position position="264"/>
    </location>
    <ligand>
        <name>beta-D-fructose 2,6-bisphosphate</name>
        <dbReference type="ChEBI" id="CHEBI:58579"/>
    </ligand>
</feature>
<feature type="binding site" evidence="3">
    <location>
        <position position="270"/>
    </location>
    <ligand>
        <name>beta-D-fructose 2,6-bisphosphate</name>
        <dbReference type="ChEBI" id="CHEBI:58579"/>
    </ligand>
</feature>
<feature type="binding site" evidence="3">
    <location>
        <position position="338"/>
    </location>
    <ligand>
        <name>beta-D-fructose 2,6-bisphosphate</name>
        <dbReference type="ChEBI" id="CHEBI:58579"/>
    </ligand>
</feature>
<feature type="binding site" evidence="2">
    <location>
        <begin position="349"/>
        <end position="352"/>
    </location>
    <ligand>
        <name>ATP</name>
        <dbReference type="ChEBI" id="CHEBI:30616"/>
    </ligand>
</feature>
<feature type="binding site" evidence="3">
    <location>
        <position position="352"/>
    </location>
    <ligand>
        <name>beta-D-fructose 2,6-bisphosphate</name>
        <dbReference type="ChEBI" id="CHEBI:58579"/>
    </ligand>
</feature>
<feature type="binding site" evidence="3">
    <location>
        <position position="356"/>
    </location>
    <ligand>
        <name>beta-D-fructose 2,6-bisphosphate</name>
        <dbReference type="ChEBI" id="CHEBI:58579"/>
    </ligand>
</feature>
<feature type="binding site" evidence="3">
    <location>
        <position position="367"/>
    </location>
    <ligand>
        <name>beta-D-fructose 2,6-bisphosphate</name>
        <dbReference type="ChEBI" id="CHEBI:58579"/>
    </ligand>
</feature>
<feature type="binding site" evidence="2">
    <location>
        <begin position="393"/>
        <end position="397"/>
    </location>
    <ligand>
        <name>ATP</name>
        <dbReference type="ChEBI" id="CHEBI:30616"/>
    </ligand>
</feature>
<feature type="binding site" evidence="3">
    <location>
        <position position="393"/>
    </location>
    <ligand>
        <name>beta-D-fructose 2,6-bisphosphate</name>
        <dbReference type="ChEBI" id="CHEBI:58579"/>
    </ligand>
</feature>
<feature type="binding site" evidence="2">
    <location>
        <position position="397"/>
    </location>
    <ligand>
        <name>beta-D-fructose 2,6-bisphosphate</name>
        <dbReference type="ChEBI" id="CHEBI:58579"/>
    </ligand>
</feature>
<feature type="binding site" evidence="3">
    <location>
        <position position="429"/>
    </location>
    <ligand>
        <name>ATP</name>
        <dbReference type="ChEBI" id="CHEBI:30616"/>
    </ligand>
</feature>
<feature type="site" description="Transition state stabilizer" evidence="3">
    <location>
        <position position="257"/>
    </location>
</feature>
<feature type="site" description="Transition state stabilizer" evidence="3">
    <location>
        <position position="264"/>
    </location>
</feature>
<feature type="site" description="Transition state stabilizer" evidence="3">
    <location>
        <position position="392"/>
    </location>
</feature>
<feature type="modified residue" description="Phosphoserine; by PKA" evidence="1">
    <location>
        <position position="31"/>
    </location>
</feature>
<dbReference type="EC" id="2.7.1.105"/>
<dbReference type="EC" id="3.1.3.46"/>
<dbReference type="EMBL" id="AF146428">
    <property type="protein sequence ID" value="AAD37721.1"/>
    <property type="molecule type" value="mRNA"/>
</dbReference>
<dbReference type="PIR" id="JC1470">
    <property type="entry name" value="JC1470"/>
</dbReference>
<dbReference type="RefSeq" id="NP_001025755.1">
    <property type="nucleotide sequence ID" value="NM_001030584.1"/>
</dbReference>
<dbReference type="SMR" id="Q91348"/>
<dbReference type="FunCoup" id="Q91348">
    <property type="interactions" value="807"/>
</dbReference>
<dbReference type="STRING" id="9031.ENSGALP00000070583"/>
<dbReference type="GlyGen" id="Q91348">
    <property type="glycosylation" value="1 site"/>
</dbReference>
<dbReference type="PaxDb" id="9031-ENSGALP00000034535"/>
<dbReference type="VEuPathDB" id="HostDB:geneid_415906"/>
<dbReference type="eggNOG" id="KOG0234">
    <property type="taxonomic scope" value="Eukaryota"/>
</dbReference>
<dbReference type="InParanoid" id="Q91348"/>
<dbReference type="PhylomeDB" id="Q91348"/>
<dbReference type="Reactome" id="R-GGA-352875">
    <property type="pathway name" value="Gluconeogenesis"/>
</dbReference>
<dbReference type="Reactome" id="R-GGA-352882">
    <property type="pathway name" value="Glycolysis"/>
</dbReference>
<dbReference type="SABIO-RK" id="Q91348"/>
<dbReference type="PRO" id="PR:Q91348"/>
<dbReference type="Proteomes" id="UP000000539">
    <property type="component" value="Unassembled WGS sequence"/>
</dbReference>
<dbReference type="GO" id="GO:0043540">
    <property type="term" value="C:6-phosphofructo-2-kinase/fructose-2,6-biphosphatase complex"/>
    <property type="evidence" value="ECO:0000318"/>
    <property type="project" value="GO_Central"/>
</dbReference>
<dbReference type="GO" id="GO:0005829">
    <property type="term" value="C:cytosol"/>
    <property type="evidence" value="ECO:0000318"/>
    <property type="project" value="GO_Central"/>
</dbReference>
<dbReference type="GO" id="GO:0003873">
    <property type="term" value="F:6-phosphofructo-2-kinase activity"/>
    <property type="evidence" value="ECO:0000318"/>
    <property type="project" value="GO_Central"/>
</dbReference>
<dbReference type="GO" id="GO:0005524">
    <property type="term" value="F:ATP binding"/>
    <property type="evidence" value="ECO:0007669"/>
    <property type="project" value="UniProtKB-KW"/>
</dbReference>
<dbReference type="GO" id="GO:0004331">
    <property type="term" value="F:fructose-2,6-bisphosphate 2-phosphatase activity"/>
    <property type="evidence" value="ECO:0000318"/>
    <property type="project" value="GO_Central"/>
</dbReference>
<dbReference type="GO" id="GO:0006003">
    <property type="term" value="P:fructose 2,6-bisphosphate metabolic process"/>
    <property type="evidence" value="ECO:0000318"/>
    <property type="project" value="GO_Central"/>
</dbReference>
<dbReference type="GO" id="GO:0006000">
    <property type="term" value="P:fructose metabolic process"/>
    <property type="evidence" value="ECO:0007669"/>
    <property type="project" value="InterPro"/>
</dbReference>
<dbReference type="CDD" id="cd07067">
    <property type="entry name" value="HP_PGM_like"/>
    <property type="match status" value="1"/>
</dbReference>
<dbReference type="FunFam" id="3.40.50.1240:FF:000001">
    <property type="entry name" value="6-phosphofructo-2-kinase/fructose-2, 6-bisphosphatase 3 isoform 2"/>
    <property type="match status" value="1"/>
</dbReference>
<dbReference type="FunFam" id="3.40.50.300:FF:000047">
    <property type="entry name" value="6-phosphofructo-2-kinase/fructose-2, 6-bisphosphatase 3 isoform 2"/>
    <property type="match status" value="1"/>
</dbReference>
<dbReference type="Gene3D" id="3.40.50.300">
    <property type="entry name" value="P-loop containing nucleotide triphosphate hydrolases"/>
    <property type="match status" value="1"/>
</dbReference>
<dbReference type="Gene3D" id="3.40.50.1240">
    <property type="entry name" value="Phosphoglycerate mutase-like"/>
    <property type="match status" value="1"/>
</dbReference>
<dbReference type="InterPro" id="IPR003094">
    <property type="entry name" value="6Pfruct_kin"/>
</dbReference>
<dbReference type="InterPro" id="IPR013079">
    <property type="entry name" value="6Phosfructo_kin"/>
</dbReference>
<dbReference type="InterPro" id="IPR013078">
    <property type="entry name" value="His_Pase_superF_clade-1"/>
</dbReference>
<dbReference type="InterPro" id="IPR029033">
    <property type="entry name" value="His_PPase_superfam"/>
</dbReference>
<dbReference type="InterPro" id="IPR027417">
    <property type="entry name" value="P-loop_NTPase"/>
</dbReference>
<dbReference type="InterPro" id="IPR001345">
    <property type="entry name" value="PG/BPGM_mutase_AS"/>
</dbReference>
<dbReference type="PANTHER" id="PTHR10606">
    <property type="entry name" value="6-PHOSPHOFRUCTO-2-KINASE/FRUCTOSE-2,6-BISPHOSPHATASE"/>
    <property type="match status" value="1"/>
</dbReference>
<dbReference type="PANTHER" id="PTHR10606:SF15">
    <property type="entry name" value="6-PHOSPHOFRUCTO-2-KINASE_FRUCTOSE-2,6-BISPHOSPHATASE 1"/>
    <property type="match status" value="1"/>
</dbReference>
<dbReference type="Pfam" id="PF01591">
    <property type="entry name" value="6PF2K"/>
    <property type="match status" value="1"/>
</dbReference>
<dbReference type="Pfam" id="PF00300">
    <property type="entry name" value="His_Phos_1"/>
    <property type="match status" value="1"/>
</dbReference>
<dbReference type="PIRSF" id="PIRSF000709">
    <property type="entry name" value="6PFK_2-Ptase"/>
    <property type="match status" value="1"/>
</dbReference>
<dbReference type="PRINTS" id="PR00991">
    <property type="entry name" value="6PFRUCTKNASE"/>
</dbReference>
<dbReference type="SMART" id="SM00855">
    <property type="entry name" value="PGAM"/>
    <property type="match status" value="1"/>
</dbReference>
<dbReference type="SUPFAM" id="SSF52540">
    <property type="entry name" value="P-loop containing nucleoside triphosphate hydrolases"/>
    <property type="match status" value="1"/>
</dbReference>
<dbReference type="SUPFAM" id="SSF53254">
    <property type="entry name" value="Phosphoglycerate mutase-like"/>
    <property type="match status" value="1"/>
</dbReference>
<dbReference type="PROSITE" id="PS00175">
    <property type="entry name" value="PG_MUTASE"/>
    <property type="match status" value="1"/>
</dbReference>
<comment type="function">
    <text>Synthesis and degradation of fructose 2,6-bisphosphate.</text>
</comment>
<comment type="catalytic activity">
    <reaction>
        <text>beta-D-fructose 2,6-bisphosphate + H2O = beta-D-fructose 6-phosphate + phosphate</text>
        <dbReference type="Rhea" id="RHEA:17289"/>
        <dbReference type="ChEBI" id="CHEBI:15377"/>
        <dbReference type="ChEBI" id="CHEBI:43474"/>
        <dbReference type="ChEBI" id="CHEBI:57634"/>
        <dbReference type="ChEBI" id="CHEBI:58579"/>
        <dbReference type="EC" id="3.1.3.46"/>
    </reaction>
</comment>
<comment type="catalytic activity">
    <reaction>
        <text>beta-D-fructose 6-phosphate + ATP = beta-D-fructose 2,6-bisphosphate + ADP + H(+)</text>
        <dbReference type="Rhea" id="RHEA:15653"/>
        <dbReference type="ChEBI" id="CHEBI:15378"/>
        <dbReference type="ChEBI" id="CHEBI:30616"/>
        <dbReference type="ChEBI" id="CHEBI:57634"/>
        <dbReference type="ChEBI" id="CHEBI:58579"/>
        <dbReference type="ChEBI" id="CHEBI:456216"/>
        <dbReference type="EC" id="2.7.1.105"/>
    </reaction>
</comment>
<comment type="activity regulation">
    <text evidence="1">Phosphorylation results in inhibition of the kinase activity.</text>
</comment>
<comment type="subunit">
    <text evidence="1">Homodimer.</text>
</comment>
<comment type="tissue specificity">
    <text>Liver.</text>
</comment>
<comment type="similarity">
    <text evidence="5">In the C-terminal section; belongs to the phosphoglycerate mutase family.</text>
</comment>
<proteinExistence type="evidence at transcript level"/>